<evidence type="ECO:0000255" key="1">
    <source>
        <dbReference type="HAMAP-Rule" id="MF_00394"/>
    </source>
</evidence>
<sequence>MTEQRPIAVLGGGSFGTAVANLLAENGHAVRQWMRDPEQAEAIRVHRENPRYLKGIKIHPAVEPVTDLLETLTACDLCFVALPSSALRSVLAPHAERLAGKLLVSLTKGIEAQTFKLMSEILEEIAPQARIGVLSGPNLAREVAEHALTATVVASEDEELCERVQAVLHGRTFRVYASSDRFGVELGGALKNVYAIIAGMAVALGMGENTKSMLITRALAEMTRFAVNQGANPMTFLGLAGVGDLIVTCSSPKSRNYQVGFALGQGLSLEDAVTRLGEVAEGVNTLKVLKAKAQEVGVYMPLVAGLHAILFEGRTLNQVIELLMRAEPKTDVDFISTSGFN</sequence>
<protein>
    <recommendedName>
        <fullName evidence="1">Glycerol-3-phosphate dehydrogenase [NAD(P)+]</fullName>
        <ecNumber evidence="1">1.1.1.94</ecNumber>
    </recommendedName>
    <alternativeName>
        <fullName evidence="1">NAD(P)(+)-dependent glycerol-3-phosphate dehydrogenase</fullName>
    </alternativeName>
    <alternativeName>
        <fullName evidence="1">NAD(P)H-dependent dihydroxyacetone-phosphate reductase</fullName>
    </alternativeName>
</protein>
<accession>C3K747</accession>
<keyword id="KW-0963">Cytoplasm</keyword>
<keyword id="KW-0444">Lipid biosynthesis</keyword>
<keyword id="KW-0443">Lipid metabolism</keyword>
<keyword id="KW-0520">NAD</keyword>
<keyword id="KW-0521">NADP</keyword>
<keyword id="KW-0547">Nucleotide-binding</keyword>
<keyword id="KW-0560">Oxidoreductase</keyword>
<keyword id="KW-0594">Phospholipid biosynthesis</keyword>
<keyword id="KW-1208">Phospholipid metabolism</keyword>
<organism>
    <name type="scientific">Pseudomonas fluorescens (strain SBW25)</name>
    <dbReference type="NCBI Taxonomy" id="216595"/>
    <lineage>
        <taxon>Bacteria</taxon>
        <taxon>Pseudomonadati</taxon>
        <taxon>Pseudomonadota</taxon>
        <taxon>Gammaproteobacteria</taxon>
        <taxon>Pseudomonadales</taxon>
        <taxon>Pseudomonadaceae</taxon>
        <taxon>Pseudomonas</taxon>
    </lineage>
</organism>
<dbReference type="EC" id="1.1.1.94" evidence="1"/>
<dbReference type="EMBL" id="AM181176">
    <property type="protein sequence ID" value="CAY48087.1"/>
    <property type="molecule type" value="Genomic_DNA"/>
</dbReference>
<dbReference type="RefSeq" id="WP_012723107.1">
    <property type="nucleotide sequence ID" value="NC_012660.1"/>
</dbReference>
<dbReference type="SMR" id="C3K747"/>
<dbReference type="STRING" id="294.SRM1_04154"/>
<dbReference type="eggNOG" id="COG0240">
    <property type="taxonomic scope" value="Bacteria"/>
</dbReference>
<dbReference type="HOGENOM" id="CLU_033449_0_2_6"/>
<dbReference type="OrthoDB" id="9812273at2"/>
<dbReference type="UniPathway" id="UPA00940"/>
<dbReference type="GO" id="GO:0005829">
    <property type="term" value="C:cytosol"/>
    <property type="evidence" value="ECO:0007669"/>
    <property type="project" value="TreeGrafter"/>
</dbReference>
<dbReference type="GO" id="GO:0047952">
    <property type="term" value="F:glycerol-3-phosphate dehydrogenase [NAD(P)+] activity"/>
    <property type="evidence" value="ECO:0007669"/>
    <property type="project" value="UniProtKB-UniRule"/>
</dbReference>
<dbReference type="GO" id="GO:0051287">
    <property type="term" value="F:NAD binding"/>
    <property type="evidence" value="ECO:0007669"/>
    <property type="project" value="InterPro"/>
</dbReference>
<dbReference type="GO" id="GO:0005975">
    <property type="term" value="P:carbohydrate metabolic process"/>
    <property type="evidence" value="ECO:0007669"/>
    <property type="project" value="InterPro"/>
</dbReference>
<dbReference type="GO" id="GO:0046167">
    <property type="term" value="P:glycerol-3-phosphate biosynthetic process"/>
    <property type="evidence" value="ECO:0007669"/>
    <property type="project" value="UniProtKB-UniRule"/>
</dbReference>
<dbReference type="GO" id="GO:0046168">
    <property type="term" value="P:glycerol-3-phosphate catabolic process"/>
    <property type="evidence" value="ECO:0007669"/>
    <property type="project" value="InterPro"/>
</dbReference>
<dbReference type="GO" id="GO:0046474">
    <property type="term" value="P:glycerophospholipid biosynthetic process"/>
    <property type="evidence" value="ECO:0007669"/>
    <property type="project" value="TreeGrafter"/>
</dbReference>
<dbReference type="FunFam" id="1.10.1040.10:FF:000001">
    <property type="entry name" value="Glycerol-3-phosphate dehydrogenase [NAD(P)+]"/>
    <property type="match status" value="1"/>
</dbReference>
<dbReference type="FunFam" id="3.40.50.720:FF:000019">
    <property type="entry name" value="Glycerol-3-phosphate dehydrogenase [NAD(P)+]"/>
    <property type="match status" value="1"/>
</dbReference>
<dbReference type="Gene3D" id="1.10.1040.10">
    <property type="entry name" value="N-(1-d-carboxylethyl)-l-norvaline Dehydrogenase, domain 2"/>
    <property type="match status" value="1"/>
</dbReference>
<dbReference type="Gene3D" id="3.40.50.720">
    <property type="entry name" value="NAD(P)-binding Rossmann-like Domain"/>
    <property type="match status" value="1"/>
</dbReference>
<dbReference type="HAMAP" id="MF_00394">
    <property type="entry name" value="NAD_Glyc3P_dehydrog"/>
    <property type="match status" value="1"/>
</dbReference>
<dbReference type="InterPro" id="IPR008927">
    <property type="entry name" value="6-PGluconate_DH-like_C_sf"/>
</dbReference>
<dbReference type="InterPro" id="IPR013328">
    <property type="entry name" value="6PGD_dom2"/>
</dbReference>
<dbReference type="InterPro" id="IPR006168">
    <property type="entry name" value="G3P_DH_NAD-dep"/>
</dbReference>
<dbReference type="InterPro" id="IPR006109">
    <property type="entry name" value="G3P_DH_NAD-dep_C"/>
</dbReference>
<dbReference type="InterPro" id="IPR011128">
    <property type="entry name" value="G3P_DH_NAD-dep_N"/>
</dbReference>
<dbReference type="InterPro" id="IPR036291">
    <property type="entry name" value="NAD(P)-bd_dom_sf"/>
</dbReference>
<dbReference type="NCBIfam" id="NF000940">
    <property type="entry name" value="PRK00094.1-2"/>
    <property type="match status" value="1"/>
</dbReference>
<dbReference type="NCBIfam" id="NF000942">
    <property type="entry name" value="PRK00094.1-4"/>
    <property type="match status" value="1"/>
</dbReference>
<dbReference type="NCBIfam" id="NF000946">
    <property type="entry name" value="PRK00094.2-4"/>
    <property type="match status" value="1"/>
</dbReference>
<dbReference type="PANTHER" id="PTHR11728">
    <property type="entry name" value="GLYCEROL-3-PHOSPHATE DEHYDROGENASE"/>
    <property type="match status" value="1"/>
</dbReference>
<dbReference type="PANTHER" id="PTHR11728:SF1">
    <property type="entry name" value="GLYCEROL-3-PHOSPHATE DEHYDROGENASE [NAD(+)] 2, CHLOROPLASTIC"/>
    <property type="match status" value="1"/>
</dbReference>
<dbReference type="Pfam" id="PF07479">
    <property type="entry name" value="NAD_Gly3P_dh_C"/>
    <property type="match status" value="1"/>
</dbReference>
<dbReference type="Pfam" id="PF01210">
    <property type="entry name" value="NAD_Gly3P_dh_N"/>
    <property type="match status" value="1"/>
</dbReference>
<dbReference type="PIRSF" id="PIRSF000114">
    <property type="entry name" value="Glycerol-3-P_dh"/>
    <property type="match status" value="1"/>
</dbReference>
<dbReference type="PRINTS" id="PR00077">
    <property type="entry name" value="GPDHDRGNASE"/>
</dbReference>
<dbReference type="SUPFAM" id="SSF48179">
    <property type="entry name" value="6-phosphogluconate dehydrogenase C-terminal domain-like"/>
    <property type="match status" value="1"/>
</dbReference>
<dbReference type="SUPFAM" id="SSF51735">
    <property type="entry name" value="NAD(P)-binding Rossmann-fold domains"/>
    <property type="match status" value="1"/>
</dbReference>
<dbReference type="PROSITE" id="PS00957">
    <property type="entry name" value="NAD_G3PDH"/>
    <property type="match status" value="1"/>
</dbReference>
<name>GPDA_PSEFS</name>
<gene>
    <name evidence="1" type="primary">gpsA</name>
    <name type="ordered locus">PFLU_1840</name>
</gene>
<reference key="1">
    <citation type="journal article" date="2009" name="Genome Biol.">
        <title>Genomic and genetic analyses of diversity and plant interactions of Pseudomonas fluorescens.</title>
        <authorList>
            <person name="Silby M.W."/>
            <person name="Cerdeno-Tarraga A.M."/>
            <person name="Vernikos G.S."/>
            <person name="Giddens S.R."/>
            <person name="Jackson R.W."/>
            <person name="Preston G.M."/>
            <person name="Zhang X.-X."/>
            <person name="Moon C.D."/>
            <person name="Gehrig S.M."/>
            <person name="Godfrey S.A.C."/>
            <person name="Knight C.G."/>
            <person name="Malone J.G."/>
            <person name="Robinson Z."/>
            <person name="Spiers A.J."/>
            <person name="Harris S."/>
            <person name="Challis G.L."/>
            <person name="Yaxley A.M."/>
            <person name="Harris D."/>
            <person name="Seeger K."/>
            <person name="Murphy L."/>
            <person name="Rutter S."/>
            <person name="Squares R."/>
            <person name="Quail M.A."/>
            <person name="Saunders E."/>
            <person name="Mavromatis K."/>
            <person name="Brettin T.S."/>
            <person name="Bentley S.D."/>
            <person name="Hothersall J."/>
            <person name="Stephens E."/>
            <person name="Thomas C.M."/>
            <person name="Parkhill J."/>
            <person name="Levy S.B."/>
            <person name="Rainey P.B."/>
            <person name="Thomson N.R."/>
        </authorList>
    </citation>
    <scope>NUCLEOTIDE SEQUENCE [LARGE SCALE GENOMIC DNA]</scope>
    <source>
        <strain>SBW25</strain>
    </source>
</reference>
<proteinExistence type="inferred from homology"/>
<comment type="function">
    <text evidence="1">Catalyzes the reduction of the glycolytic intermediate dihydroxyacetone phosphate (DHAP) to sn-glycerol 3-phosphate (G3P), the key precursor for phospholipid synthesis.</text>
</comment>
<comment type="catalytic activity">
    <reaction evidence="1">
        <text>sn-glycerol 3-phosphate + NAD(+) = dihydroxyacetone phosphate + NADH + H(+)</text>
        <dbReference type="Rhea" id="RHEA:11092"/>
        <dbReference type="ChEBI" id="CHEBI:15378"/>
        <dbReference type="ChEBI" id="CHEBI:57540"/>
        <dbReference type="ChEBI" id="CHEBI:57597"/>
        <dbReference type="ChEBI" id="CHEBI:57642"/>
        <dbReference type="ChEBI" id="CHEBI:57945"/>
        <dbReference type="EC" id="1.1.1.94"/>
    </reaction>
    <physiologicalReaction direction="right-to-left" evidence="1">
        <dbReference type="Rhea" id="RHEA:11094"/>
    </physiologicalReaction>
</comment>
<comment type="catalytic activity">
    <reaction evidence="1">
        <text>sn-glycerol 3-phosphate + NADP(+) = dihydroxyacetone phosphate + NADPH + H(+)</text>
        <dbReference type="Rhea" id="RHEA:11096"/>
        <dbReference type="ChEBI" id="CHEBI:15378"/>
        <dbReference type="ChEBI" id="CHEBI:57597"/>
        <dbReference type="ChEBI" id="CHEBI:57642"/>
        <dbReference type="ChEBI" id="CHEBI:57783"/>
        <dbReference type="ChEBI" id="CHEBI:58349"/>
        <dbReference type="EC" id="1.1.1.94"/>
    </reaction>
    <physiologicalReaction direction="right-to-left" evidence="1">
        <dbReference type="Rhea" id="RHEA:11098"/>
    </physiologicalReaction>
</comment>
<comment type="pathway">
    <text evidence="1">Membrane lipid metabolism; glycerophospholipid metabolism.</text>
</comment>
<comment type="subcellular location">
    <subcellularLocation>
        <location evidence="1">Cytoplasm</location>
    </subcellularLocation>
</comment>
<comment type="similarity">
    <text evidence="1">Belongs to the NAD-dependent glycerol-3-phosphate dehydrogenase family.</text>
</comment>
<feature type="chain" id="PRO_1000205865" description="Glycerol-3-phosphate dehydrogenase [NAD(P)+]">
    <location>
        <begin position="1"/>
        <end position="341"/>
    </location>
</feature>
<feature type="active site" description="Proton acceptor" evidence="1">
    <location>
        <position position="191"/>
    </location>
</feature>
<feature type="binding site" evidence="1">
    <location>
        <position position="14"/>
    </location>
    <ligand>
        <name>NADPH</name>
        <dbReference type="ChEBI" id="CHEBI:57783"/>
    </ligand>
</feature>
<feature type="binding site" evidence="1">
    <location>
        <position position="15"/>
    </location>
    <ligand>
        <name>NADPH</name>
        <dbReference type="ChEBI" id="CHEBI:57783"/>
    </ligand>
</feature>
<feature type="binding site" evidence="1">
    <location>
        <position position="35"/>
    </location>
    <ligand>
        <name>NADPH</name>
        <dbReference type="ChEBI" id="CHEBI:57783"/>
    </ligand>
</feature>
<feature type="binding site" evidence="1">
    <location>
        <position position="108"/>
    </location>
    <ligand>
        <name>NADPH</name>
        <dbReference type="ChEBI" id="CHEBI:57783"/>
    </ligand>
</feature>
<feature type="binding site" evidence="1">
    <location>
        <position position="108"/>
    </location>
    <ligand>
        <name>sn-glycerol 3-phosphate</name>
        <dbReference type="ChEBI" id="CHEBI:57597"/>
    </ligand>
</feature>
<feature type="binding site" evidence="1">
    <location>
        <position position="136"/>
    </location>
    <ligand>
        <name>sn-glycerol 3-phosphate</name>
        <dbReference type="ChEBI" id="CHEBI:57597"/>
    </ligand>
</feature>
<feature type="binding site" evidence="1">
    <location>
        <position position="140"/>
    </location>
    <ligand>
        <name>NADPH</name>
        <dbReference type="ChEBI" id="CHEBI:57783"/>
    </ligand>
</feature>
<feature type="binding site" evidence="1">
    <location>
        <position position="191"/>
    </location>
    <ligand>
        <name>sn-glycerol 3-phosphate</name>
        <dbReference type="ChEBI" id="CHEBI:57597"/>
    </ligand>
</feature>
<feature type="binding site" evidence="1">
    <location>
        <position position="244"/>
    </location>
    <ligand>
        <name>sn-glycerol 3-phosphate</name>
        <dbReference type="ChEBI" id="CHEBI:57597"/>
    </ligand>
</feature>
<feature type="binding site" evidence="1">
    <location>
        <position position="254"/>
    </location>
    <ligand>
        <name>sn-glycerol 3-phosphate</name>
        <dbReference type="ChEBI" id="CHEBI:57597"/>
    </ligand>
</feature>
<feature type="binding site" evidence="1">
    <location>
        <position position="255"/>
    </location>
    <ligand>
        <name>NADPH</name>
        <dbReference type="ChEBI" id="CHEBI:57783"/>
    </ligand>
</feature>
<feature type="binding site" evidence="1">
    <location>
        <position position="255"/>
    </location>
    <ligand>
        <name>sn-glycerol 3-phosphate</name>
        <dbReference type="ChEBI" id="CHEBI:57597"/>
    </ligand>
</feature>
<feature type="binding site" evidence="1">
    <location>
        <position position="256"/>
    </location>
    <ligand>
        <name>sn-glycerol 3-phosphate</name>
        <dbReference type="ChEBI" id="CHEBI:57597"/>
    </ligand>
</feature>
<feature type="binding site" evidence="1">
    <location>
        <position position="279"/>
    </location>
    <ligand>
        <name>NADPH</name>
        <dbReference type="ChEBI" id="CHEBI:57783"/>
    </ligand>
</feature>
<feature type="binding site" evidence="1">
    <location>
        <position position="281"/>
    </location>
    <ligand>
        <name>NADPH</name>
        <dbReference type="ChEBI" id="CHEBI:57783"/>
    </ligand>
</feature>